<proteinExistence type="evidence at protein level"/>
<name>OVOL1_HUMAN</name>
<feature type="chain" id="PRO_0000047011" description="Putative transcription factor Ovo-like 1">
    <location>
        <begin position="1"/>
        <end position="267"/>
    </location>
</feature>
<feature type="zinc finger region" description="C2H2-type 1" evidence="2">
    <location>
        <begin position="118"/>
        <end position="140"/>
    </location>
</feature>
<feature type="zinc finger region" description="C2H2-type 2" evidence="2">
    <location>
        <begin position="146"/>
        <end position="168"/>
    </location>
</feature>
<feature type="zinc finger region" description="C2H2-type 3" evidence="2">
    <location>
        <begin position="174"/>
        <end position="197"/>
    </location>
</feature>
<feature type="zinc finger region" description="C2H2-type 4" evidence="2">
    <location>
        <begin position="213"/>
        <end position="235"/>
    </location>
</feature>
<feature type="sequence conflict" description="In Ref. 3; AAB72084." evidence="3" ref="3">
    <original>Y</original>
    <variation>G</variation>
    <location>
        <position position="150"/>
    </location>
</feature>
<reference key="1">
    <citation type="journal article" date="2007" name="BMC Genomics">
        <title>The full-ORF clone resource of the German cDNA consortium.</title>
        <authorList>
            <person name="Bechtel S."/>
            <person name="Rosenfelder H."/>
            <person name="Duda A."/>
            <person name="Schmidt C.P."/>
            <person name="Ernst U."/>
            <person name="Wellenreuther R."/>
            <person name="Mehrle A."/>
            <person name="Schuster C."/>
            <person name="Bahr A."/>
            <person name="Bloecker H."/>
            <person name="Heubner D."/>
            <person name="Hoerlein A."/>
            <person name="Michel G."/>
            <person name="Wedler H."/>
            <person name="Koehrer K."/>
            <person name="Ottenwaelder B."/>
            <person name="Poustka A."/>
            <person name="Wiemann S."/>
            <person name="Schupp I."/>
        </authorList>
    </citation>
    <scope>NUCLEOTIDE SEQUENCE [LARGE SCALE MRNA]</scope>
    <source>
        <tissue>Salivary gland</tissue>
    </source>
</reference>
<reference key="2">
    <citation type="journal article" date="2004" name="Genome Res.">
        <title>The status, quality, and expansion of the NIH full-length cDNA project: the Mammalian Gene Collection (MGC).</title>
        <authorList>
            <consortium name="The MGC Project Team"/>
        </authorList>
    </citation>
    <scope>NUCLEOTIDE SEQUENCE [LARGE SCALE MRNA]</scope>
    <source>
        <tissue>Placenta</tissue>
    </source>
</reference>
<reference key="3">
    <citation type="journal article" date="1997" name="Mamm. Genome">
        <title>Characterization of a human homolog (OVOL1) of the Drosophila ovo gene, which maps to chromosome 11q13.</title>
        <authorList>
            <person name="Chidambaram A."/>
            <person name="Allikmets R."/>
            <person name="Chandrasekarappa S."/>
            <person name="Guru S.C."/>
            <person name="Modi W."/>
            <person name="Gerrard B."/>
            <person name="Dean M."/>
        </authorList>
    </citation>
    <scope>NUCLEOTIDE SEQUENCE [MRNA] OF 87-267</scope>
</reference>
<accession>O14753</accession>
<accession>Q6PCB1</accession>
<gene>
    <name type="primary">OVOL1</name>
</gene>
<dbReference type="EMBL" id="BX648725">
    <property type="protein sequence ID" value="CAH56127.1"/>
    <property type="molecule type" value="mRNA"/>
</dbReference>
<dbReference type="EMBL" id="BC059408">
    <property type="protein sequence ID" value="AAH59408.1"/>
    <property type="molecule type" value="mRNA"/>
</dbReference>
<dbReference type="EMBL" id="AF016045">
    <property type="protein sequence ID" value="AAB72084.1"/>
    <property type="molecule type" value="mRNA"/>
</dbReference>
<dbReference type="CCDS" id="CCDS8112.1"/>
<dbReference type="RefSeq" id="NP_004552.2">
    <property type="nucleotide sequence ID" value="NM_004561.3"/>
</dbReference>
<dbReference type="SMR" id="O14753"/>
<dbReference type="BioGRID" id="111057">
    <property type="interactions" value="13"/>
</dbReference>
<dbReference type="FunCoup" id="O14753">
    <property type="interactions" value="1254"/>
</dbReference>
<dbReference type="IntAct" id="O14753">
    <property type="interactions" value="5"/>
</dbReference>
<dbReference type="STRING" id="9606.ENSP00000337862"/>
<dbReference type="iPTMnet" id="O14753"/>
<dbReference type="PhosphoSitePlus" id="O14753"/>
<dbReference type="BioMuta" id="OVOL1"/>
<dbReference type="jPOST" id="O14753"/>
<dbReference type="MassIVE" id="O14753"/>
<dbReference type="PaxDb" id="9606-ENSP00000337862"/>
<dbReference type="PeptideAtlas" id="O14753"/>
<dbReference type="ProteomicsDB" id="48206"/>
<dbReference type="Antibodypedia" id="1312">
    <property type="antibodies" value="233 antibodies from 28 providers"/>
</dbReference>
<dbReference type="DNASU" id="5017"/>
<dbReference type="Ensembl" id="ENST00000335987.8">
    <property type="protein sequence ID" value="ENSP00000337862.3"/>
    <property type="gene ID" value="ENSG00000172818.10"/>
</dbReference>
<dbReference type="GeneID" id="5017"/>
<dbReference type="KEGG" id="hsa:5017"/>
<dbReference type="MANE-Select" id="ENST00000335987.8">
    <property type="protein sequence ID" value="ENSP00000337862.3"/>
    <property type="RefSeq nucleotide sequence ID" value="NM_004561.4"/>
    <property type="RefSeq protein sequence ID" value="NP_004552.2"/>
</dbReference>
<dbReference type="UCSC" id="uc001ofp.4">
    <property type="organism name" value="human"/>
</dbReference>
<dbReference type="AGR" id="HGNC:8525"/>
<dbReference type="CTD" id="5017"/>
<dbReference type="DisGeNET" id="5017"/>
<dbReference type="GeneCards" id="OVOL1"/>
<dbReference type="HGNC" id="HGNC:8525">
    <property type="gene designation" value="OVOL1"/>
</dbReference>
<dbReference type="HPA" id="ENSG00000172818">
    <property type="expression patterns" value="Tissue enhanced (esophagus, skin, testis)"/>
</dbReference>
<dbReference type="MIM" id="602313">
    <property type="type" value="gene"/>
</dbReference>
<dbReference type="neXtProt" id="NX_O14753"/>
<dbReference type="OpenTargets" id="ENSG00000172818"/>
<dbReference type="PharmGKB" id="PA32853"/>
<dbReference type="VEuPathDB" id="HostDB:ENSG00000172818"/>
<dbReference type="eggNOG" id="KOG3576">
    <property type="taxonomic scope" value="Eukaryota"/>
</dbReference>
<dbReference type="GeneTree" id="ENSGT00940000161363"/>
<dbReference type="HOGENOM" id="CLU_087964_0_0_1"/>
<dbReference type="InParanoid" id="O14753"/>
<dbReference type="OMA" id="ECGCTSD"/>
<dbReference type="OrthoDB" id="6508643at2759"/>
<dbReference type="PAN-GO" id="O14753">
    <property type="GO annotations" value="5 GO annotations based on evolutionary models"/>
</dbReference>
<dbReference type="PhylomeDB" id="O14753"/>
<dbReference type="TreeFam" id="TF337552"/>
<dbReference type="PathwayCommons" id="O14753"/>
<dbReference type="SignaLink" id="O14753"/>
<dbReference type="BioGRID-ORCS" id="5017">
    <property type="hits" value="9 hits in 1178 CRISPR screens"/>
</dbReference>
<dbReference type="GenomeRNAi" id="5017"/>
<dbReference type="Pharos" id="O14753">
    <property type="development level" value="Tbio"/>
</dbReference>
<dbReference type="PRO" id="PR:O14753"/>
<dbReference type="Proteomes" id="UP000005640">
    <property type="component" value="Chromosome 11"/>
</dbReference>
<dbReference type="RNAct" id="O14753">
    <property type="molecule type" value="protein"/>
</dbReference>
<dbReference type="Bgee" id="ENSG00000172818">
    <property type="expression patterns" value="Expressed in gingival epithelium and 129 other cell types or tissues"/>
</dbReference>
<dbReference type="ExpressionAtlas" id="O14753">
    <property type="expression patterns" value="baseline and differential"/>
</dbReference>
<dbReference type="GO" id="GO:0005634">
    <property type="term" value="C:nucleus"/>
    <property type="evidence" value="ECO:0000318"/>
    <property type="project" value="GO_Central"/>
</dbReference>
<dbReference type="GO" id="GO:0000981">
    <property type="term" value="F:DNA-binding transcription factor activity, RNA polymerase II-specific"/>
    <property type="evidence" value="ECO:0000318"/>
    <property type="project" value="GO_Central"/>
</dbReference>
<dbReference type="GO" id="GO:0001227">
    <property type="term" value="F:DNA-binding transcription repressor activity, RNA polymerase II-specific"/>
    <property type="evidence" value="ECO:0007669"/>
    <property type="project" value="Ensembl"/>
</dbReference>
<dbReference type="GO" id="GO:0000978">
    <property type="term" value="F:RNA polymerase II cis-regulatory region sequence-specific DNA binding"/>
    <property type="evidence" value="ECO:0000318"/>
    <property type="project" value="GO_Central"/>
</dbReference>
<dbReference type="GO" id="GO:1990837">
    <property type="term" value="F:sequence-specific double-stranded DNA binding"/>
    <property type="evidence" value="ECO:0000314"/>
    <property type="project" value="ARUK-UCL"/>
</dbReference>
<dbReference type="GO" id="GO:0008270">
    <property type="term" value="F:zinc ion binding"/>
    <property type="evidence" value="ECO:0007669"/>
    <property type="project" value="UniProtKB-KW"/>
</dbReference>
<dbReference type="GO" id="GO:0009913">
    <property type="term" value="P:epidermal cell differentiation"/>
    <property type="evidence" value="ECO:0000318"/>
    <property type="project" value="GO_Central"/>
</dbReference>
<dbReference type="GO" id="GO:0051729">
    <property type="term" value="P:germline cell cycle switching, mitotic to meiotic cell cycle"/>
    <property type="evidence" value="ECO:0007669"/>
    <property type="project" value="Ensembl"/>
</dbReference>
<dbReference type="GO" id="GO:0043616">
    <property type="term" value="P:keratinocyte proliferation"/>
    <property type="evidence" value="ECO:0007669"/>
    <property type="project" value="Ensembl"/>
</dbReference>
<dbReference type="GO" id="GO:0001822">
    <property type="term" value="P:kidney development"/>
    <property type="evidence" value="ECO:0007669"/>
    <property type="project" value="Ensembl"/>
</dbReference>
<dbReference type="GO" id="GO:0044771">
    <property type="term" value="P:meiotic cell cycle phase transition"/>
    <property type="evidence" value="ECO:0007669"/>
    <property type="project" value="Ensembl"/>
</dbReference>
<dbReference type="GO" id="GO:0007498">
    <property type="term" value="P:mesoderm development"/>
    <property type="evidence" value="ECO:0007669"/>
    <property type="project" value="Ensembl"/>
</dbReference>
<dbReference type="GO" id="GO:0010839">
    <property type="term" value="P:negative regulation of keratinocyte proliferation"/>
    <property type="evidence" value="ECO:0007669"/>
    <property type="project" value="Ensembl"/>
</dbReference>
<dbReference type="GO" id="GO:1901994">
    <property type="term" value="P:negative regulation of meiotic cell cycle phase transition"/>
    <property type="evidence" value="ECO:0007669"/>
    <property type="project" value="Ensembl"/>
</dbReference>
<dbReference type="GO" id="GO:2000647">
    <property type="term" value="P:negative regulation of stem cell proliferation"/>
    <property type="evidence" value="ECO:0007669"/>
    <property type="project" value="Ensembl"/>
</dbReference>
<dbReference type="GO" id="GO:0006357">
    <property type="term" value="P:regulation of transcription by RNA polymerase II"/>
    <property type="evidence" value="ECO:0000318"/>
    <property type="project" value="GO_Central"/>
</dbReference>
<dbReference type="GO" id="GO:0043588">
    <property type="term" value="P:skin development"/>
    <property type="evidence" value="ECO:0007669"/>
    <property type="project" value="Ensembl"/>
</dbReference>
<dbReference type="GO" id="GO:0007283">
    <property type="term" value="P:spermatogenesis"/>
    <property type="evidence" value="ECO:0007669"/>
    <property type="project" value="Ensembl"/>
</dbReference>
<dbReference type="GO" id="GO:0072089">
    <property type="term" value="P:stem cell proliferation"/>
    <property type="evidence" value="ECO:0007669"/>
    <property type="project" value="Ensembl"/>
</dbReference>
<dbReference type="FunFam" id="3.30.160.60:FF:001921">
    <property type="entry name" value="Putative transcription factor Ovo-like 1"/>
    <property type="match status" value="1"/>
</dbReference>
<dbReference type="FunFam" id="3.30.160.60:FF:001221">
    <property type="entry name" value="putative transcription factor Ovo-like 1"/>
    <property type="match status" value="1"/>
</dbReference>
<dbReference type="FunFam" id="3.30.160.60:FF:001250">
    <property type="entry name" value="putative transcription factor ovo-like protein 3"/>
    <property type="match status" value="1"/>
</dbReference>
<dbReference type="Gene3D" id="3.30.160.60">
    <property type="entry name" value="Classic Zinc Finger"/>
    <property type="match status" value="3"/>
</dbReference>
<dbReference type="InterPro" id="IPR027756">
    <property type="entry name" value="Ovo-like"/>
</dbReference>
<dbReference type="InterPro" id="IPR036236">
    <property type="entry name" value="Znf_C2H2_sf"/>
</dbReference>
<dbReference type="InterPro" id="IPR013087">
    <property type="entry name" value="Znf_C2H2_type"/>
</dbReference>
<dbReference type="PANTHER" id="PTHR10032:SF217">
    <property type="entry name" value="TRANSCRIPTION FACTOR OVO-LIKE 1-RELATED"/>
    <property type="match status" value="1"/>
</dbReference>
<dbReference type="PANTHER" id="PTHR10032">
    <property type="entry name" value="ZINC FINGER PROTEIN WITH KRAB AND SCAN DOMAINS"/>
    <property type="match status" value="1"/>
</dbReference>
<dbReference type="Pfam" id="PF00096">
    <property type="entry name" value="zf-C2H2"/>
    <property type="match status" value="1"/>
</dbReference>
<dbReference type="Pfam" id="PF13465">
    <property type="entry name" value="zf-H2C2_2"/>
    <property type="match status" value="1"/>
</dbReference>
<dbReference type="SMART" id="SM00355">
    <property type="entry name" value="ZnF_C2H2"/>
    <property type="match status" value="4"/>
</dbReference>
<dbReference type="SUPFAM" id="SSF57667">
    <property type="entry name" value="beta-beta-alpha zinc fingers"/>
    <property type="match status" value="2"/>
</dbReference>
<dbReference type="PROSITE" id="PS00028">
    <property type="entry name" value="ZINC_FINGER_C2H2_1"/>
    <property type="match status" value="3"/>
</dbReference>
<dbReference type="PROSITE" id="PS50157">
    <property type="entry name" value="ZINC_FINGER_C2H2_2"/>
    <property type="match status" value="4"/>
</dbReference>
<sequence length="267" mass="30259">MPRAFLVKKPCVSTCKRNWSELPDEERGEIYVPVSLGFCPPQPYREPEPSVAEPPSCPLALNMSLRDSSYSMAPGPCVVAQLPSEDMGHLTDPQSRDHGFLRTKMKVTLGDSPSGDLFTCRVCQKAFTYQRMLNRHMKCHNDVKRHLCTYCGKGFNDTFDLKRHVRTHTGVRPYKCSLCDKAFTQRCSLESHLKKIHGVQQKYAYKERRAKLYVCEECGCTSESQEGHVLHLKEHHPDSPLLRKTSKKVAVALQNTVTSLLQGSPHL</sequence>
<evidence type="ECO:0000250" key="1"/>
<evidence type="ECO:0000255" key="2">
    <source>
        <dbReference type="PROSITE-ProRule" id="PRU00042"/>
    </source>
</evidence>
<evidence type="ECO:0000305" key="3"/>
<comment type="function">
    <text evidence="1">Putative transcription factor. Involved in hair formation and spermatogenesis. May function in the differentiation and/or maintenance of the urogenital system (By similarity).</text>
</comment>
<comment type="interaction">
    <interactant intactId="EBI-3917713">
        <id>O14753</id>
    </interactant>
    <interactant intactId="EBI-6658203">
        <id>Q86YD7</id>
        <label>FAM90A1</label>
    </interactant>
    <organismsDiffer>false</organismsDiffer>
    <experiments>3</experiments>
</comment>
<comment type="interaction">
    <interactant intactId="EBI-3917713">
        <id>O14753</id>
    </interactant>
    <interactant intactId="EBI-2830427">
        <id>Q03252</id>
        <label>LMNB2</label>
    </interactant>
    <organismsDiffer>false</organismsDiffer>
    <experiments>3</experiments>
</comment>
<comment type="interaction">
    <interactant intactId="EBI-3917713">
        <id>O14753</id>
    </interactant>
    <interactant intactId="EBI-740595">
        <id>Q9UMX1</id>
        <label>SUFU</label>
    </interactant>
    <organismsDiffer>false</organismsDiffer>
    <experiments>3</experiments>
</comment>
<comment type="subcellular location">
    <subcellularLocation>
        <location evidence="1">Nucleus</location>
    </subcellularLocation>
</comment>
<comment type="tissue specificity">
    <text>Expressed in fetal kidney, and also in adult pancreas and placenta. Not expressed in intestine, peripheral blood lymphocytes and ovary.</text>
</comment>
<organism>
    <name type="scientific">Homo sapiens</name>
    <name type="common">Human</name>
    <dbReference type="NCBI Taxonomy" id="9606"/>
    <lineage>
        <taxon>Eukaryota</taxon>
        <taxon>Metazoa</taxon>
        <taxon>Chordata</taxon>
        <taxon>Craniata</taxon>
        <taxon>Vertebrata</taxon>
        <taxon>Euteleostomi</taxon>
        <taxon>Mammalia</taxon>
        <taxon>Eutheria</taxon>
        <taxon>Euarchontoglires</taxon>
        <taxon>Primates</taxon>
        <taxon>Haplorrhini</taxon>
        <taxon>Catarrhini</taxon>
        <taxon>Hominidae</taxon>
        <taxon>Homo</taxon>
    </lineage>
</organism>
<protein>
    <recommendedName>
        <fullName>Putative transcription factor Ovo-like 1</fullName>
        <shortName>hOvo1</shortName>
    </recommendedName>
</protein>
<keyword id="KW-0238">DNA-binding</keyword>
<keyword id="KW-0479">Metal-binding</keyword>
<keyword id="KW-0539">Nucleus</keyword>
<keyword id="KW-1267">Proteomics identification</keyword>
<keyword id="KW-1185">Reference proteome</keyword>
<keyword id="KW-0677">Repeat</keyword>
<keyword id="KW-0804">Transcription</keyword>
<keyword id="KW-0805">Transcription regulation</keyword>
<keyword id="KW-0862">Zinc</keyword>
<keyword id="KW-0863">Zinc-finger</keyword>